<sequence length="305" mass="33526">MLKQRTIKSIVKTVGIGVHSGRKVELTLRPAAPDTGIVFSRVDLPTPVDIPASALSIGDTRLASVLQKDGVRVSTVEHLMSACAGLGIDNLYVDVTAEEIPIMDGSAATFVFLIQSAGIEEQNAAKKFIKVTKPVEIRDGDKFARLDPYFGFKLKFTIDFRHPAVDKTGQELEVDFANTSYVREIARARTFGFAHEVEMMRELGLARGGSMDNAIVLDEYRILNNDGLRYDDEFVKHKMLDAIGDLYVIGHPLLASYTAYKSGHGLNNALLRELLAHEQAYEIVTFDDPKTAPTGFGFDAQTAFA</sequence>
<accession>A3NZK8</accession>
<proteinExistence type="inferred from homology"/>
<name>LPXC_BURP0</name>
<gene>
    <name evidence="1" type="primary">lpxC</name>
    <name type="ordered locus">BURPS1106A_3543</name>
</gene>
<protein>
    <recommendedName>
        <fullName evidence="1">UDP-3-O-acyl-N-acetylglucosamine deacetylase</fullName>
        <shortName evidence="1">UDP-3-O-acyl-GlcNAc deacetylase</shortName>
        <ecNumber evidence="1">3.5.1.108</ecNumber>
    </recommendedName>
    <alternativeName>
        <fullName evidence="1">UDP-3-O-[R-3-hydroxymyristoyl]-N-acetylglucosamine deacetylase</fullName>
    </alternativeName>
</protein>
<evidence type="ECO:0000255" key="1">
    <source>
        <dbReference type="HAMAP-Rule" id="MF_00388"/>
    </source>
</evidence>
<organism>
    <name type="scientific">Burkholderia pseudomallei (strain 1106a)</name>
    <dbReference type="NCBI Taxonomy" id="357348"/>
    <lineage>
        <taxon>Bacteria</taxon>
        <taxon>Pseudomonadati</taxon>
        <taxon>Pseudomonadota</taxon>
        <taxon>Betaproteobacteria</taxon>
        <taxon>Burkholderiales</taxon>
        <taxon>Burkholderiaceae</taxon>
        <taxon>Burkholderia</taxon>
        <taxon>pseudomallei group</taxon>
    </lineage>
</organism>
<comment type="function">
    <text evidence="1">Catalyzes the hydrolysis of UDP-3-O-myristoyl-N-acetylglucosamine to form UDP-3-O-myristoylglucosamine and acetate, the committed step in lipid A biosynthesis.</text>
</comment>
<comment type="catalytic activity">
    <reaction evidence="1">
        <text>a UDP-3-O-[(3R)-3-hydroxyacyl]-N-acetyl-alpha-D-glucosamine + H2O = a UDP-3-O-[(3R)-3-hydroxyacyl]-alpha-D-glucosamine + acetate</text>
        <dbReference type="Rhea" id="RHEA:67816"/>
        <dbReference type="ChEBI" id="CHEBI:15377"/>
        <dbReference type="ChEBI" id="CHEBI:30089"/>
        <dbReference type="ChEBI" id="CHEBI:137740"/>
        <dbReference type="ChEBI" id="CHEBI:173225"/>
        <dbReference type="EC" id="3.5.1.108"/>
    </reaction>
</comment>
<comment type="cofactor">
    <cofactor evidence="1">
        <name>Zn(2+)</name>
        <dbReference type="ChEBI" id="CHEBI:29105"/>
    </cofactor>
</comment>
<comment type="pathway">
    <text evidence="1">Glycolipid biosynthesis; lipid IV(A) biosynthesis; lipid IV(A) from (3R)-3-hydroxytetradecanoyl-[acyl-carrier-protein] and UDP-N-acetyl-alpha-D-glucosamine: step 2/6.</text>
</comment>
<comment type="similarity">
    <text evidence="1">Belongs to the LpxC family.</text>
</comment>
<keyword id="KW-0378">Hydrolase</keyword>
<keyword id="KW-0441">Lipid A biosynthesis</keyword>
<keyword id="KW-0444">Lipid biosynthesis</keyword>
<keyword id="KW-0443">Lipid metabolism</keyword>
<keyword id="KW-0479">Metal-binding</keyword>
<keyword id="KW-0862">Zinc</keyword>
<feature type="chain" id="PRO_1000013195" description="UDP-3-O-acyl-N-acetylglucosamine deacetylase">
    <location>
        <begin position="1"/>
        <end position="305"/>
    </location>
</feature>
<feature type="active site" description="Proton donor" evidence="1">
    <location>
        <position position="264"/>
    </location>
</feature>
<feature type="binding site" evidence="1">
    <location>
        <position position="78"/>
    </location>
    <ligand>
        <name>Zn(2+)</name>
        <dbReference type="ChEBI" id="CHEBI:29105"/>
    </ligand>
</feature>
<feature type="binding site" evidence="1">
    <location>
        <position position="237"/>
    </location>
    <ligand>
        <name>Zn(2+)</name>
        <dbReference type="ChEBI" id="CHEBI:29105"/>
    </ligand>
</feature>
<feature type="binding site" evidence="1">
    <location>
        <position position="241"/>
    </location>
    <ligand>
        <name>Zn(2+)</name>
        <dbReference type="ChEBI" id="CHEBI:29105"/>
    </ligand>
</feature>
<reference key="1">
    <citation type="journal article" date="2010" name="Genome Biol. Evol.">
        <title>Continuing evolution of Burkholderia mallei through genome reduction and large-scale rearrangements.</title>
        <authorList>
            <person name="Losada L."/>
            <person name="Ronning C.M."/>
            <person name="DeShazer D."/>
            <person name="Woods D."/>
            <person name="Fedorova N."/>
            <person name="Kim H.S."/>
            <person name="Shabalina S.A."/>
            <person name="Pearson T.R."/>
            <person name="Brinkac L."/>
            <person name="Tan P."/>
            <person name="Nandi T."/>
            <person name="Crabtree J."/>
            <person name="Badger J."/>
            <person name="Beckstrom-Sternberg S."/>
            <person name="Saqib M."/>
            <person name="Schutzer S.E."/>
            <person name="Keim P."/>
            <person name="Nierman W.C."/>
        </authorList>
    </citation>
    <scope>NUCLEOTIDE SEQUENCE [LARGE SCALE GENOMIC DNA]</scope>
    <source>
        <strain>1106a</strain>
    </source>
</reference>
<dbReference type="EC" id="3.5.1.108" evidence="1"/>
<dbReference type="EMBL" id="CP000572">
    <property type="protein sequence ID" value="ABN90702.1"/>
    <property type="molecule type" value="Genomic_DNA"/>
</dbReference>
<dbReference type="RefSeq" id="WP_004194158.1">
    <property type="nucleotide sequence ID" value="NC_009076.1"/>
</dbReference>
<dbReference type="SMR" id="A3NZK8"/>
<dbReference type="GeneID" id="93061620"/>
<dbReference type="KEGG" id="bpl:BURPS1106A_3543"/>
<dbReference type="HOGENOM" id="CLU_046528_1_0_4"/>
<dbReference type="UniPathway" id="UPA00359">
    <property type="reaction ID" value="UER00478"/>
</dbReference>
<dbReference type="Proteomes" id="UP000006738">
    <property type="component" value="Chromosome I"/>
</dbReference>
<dbReference type="GO" id="GO:0016020">
    <property type="term" value="C:membrane"/>
    <property type="evidence" value="ECO:0007669"/>
    <property type="project" value="GOC"/>
</dbReference>
<dbReference type="GO" id="GO:0046872">
    <property type="term" value="F:metal ion binding"/>
    <property type="evidence" value="ECO:0007669"/>
    <property type="project" value="UniProtKB-KW"/>
</dbReference>
<dbReference type="GO" id="GO:0103117">
    <property type="term" value="F:UDP-3-O-acyl-N-acetylglucosamine deacetylase activity"/>
    <property type="evidence" value="ECO:0007669"/>
    <property type="project" value="UniProtKB-UniRule"/>
</dbReference>
<dbReference type="GO" id="GO:0009245">
    <property type="term" value="P:lipid A biosynthetic process"/>
    <property type="evidence" value="ECO:0007669"/>
    <property type="project" value="UniProtKB-UniRule"/>
</dbReference>
<dbReference type="Gene3D" id="3.30.230.20">
    <property type="entry name" value="lpxc deacetylase, domain 1"/>
    <property type="match status" value="1"/>
</dbReference>
<dbReference type="Gene3D" id="3.30.1700.10">
    <property type="entry name" value="lpxc deacetylase, domain 2"/>
    <property type="match status" value="1"/>
</dbReference>
<dbReference type="HAMAP" id="MF_00388">
    <property type="entry name" value="LpxC"/>
    <property type="match status" value="1"/>
</dbReference>
<dbReference type="InterPro" id="IPR020568">
    <property type="entry name" value="Ribosomal_Su5_D2-typ_SF"/>
</dbReference>
<dbReference type="InterPro" id="IPR004463">
    <property type="entry name" value="UDP-acyl_GlcNac_deAcase"/>
</dbReference>
<dbReference type="InterPro" id="IPR011334">
    <property type="entry name" value="UDP-acyl_GlcNac_deAcase_C"/>
</dbReference>
<dbReference type="InterPro" id="IPR015870">
    <property type="entry name" value="UDP-acyl_N-AcGlcN_deAcase_N"/>
</dbReference>
<dbReference type="NCBIfam" id="TIGR00325">
    <property type="entry name" value="lpxC"/>
    <property type="match status" value="1"/>
</dbReference>
<dbReference type="PANTHER" id="PTHR33694">
    <property type="entry name" value="UDP-3-O-ACYL-N-ACETYLGLUCOSAMINE DEACETYLASE 1, MITOCHONDRIAL-RELATED"/>
    <property type="match status" value="1"/>
</dbReference>
<dbReference type="PANTHER" id="PTHR33694:SF1">
    <property type="entry name" value="UDP-3-O-ACYL-N-ACETYLGLUCOSAMINE DEACETYLASE 1, MITOCHONDRIAL-RELATED"/>
    <property type="match status" value="1"/>
</dbReference>
<dbReference type="Pfam" id="PF03331">
    <property type="entry name" value="LpxC"/>
    <property type="match status" value="1"/>
</dbReference>
<dbReference type="SUPFAM" id="SSF54211">
    <property type="entry name" value="Ribosomal protein S5 domain 2-like"/>
    <property type="match status" value="2"/>
</dbReference>